<protein>
    <recommendedName>
        <fullName evidence="1">Apelin receptor early endogenous ligand</fullName>
    </recommendedName>
    <alternativeName>
        <fullName evidence="8">Protein Elabela</fullName>
        <shortName evidence="8">ELA</shortName>
    </alternativeName>
    <alternativeName>
        <fullName evidence="9">Protein Toddler</fullName>
    </alternativeName>
</protein>
<gene>
    <name evidence="1" type="primary">apela</name>
    <name type="synonym">ela</name>
    <name type="synonym">tdl</name>
</gene>
<dbReference type="EMBL" id="BX323590">
    <property type="status" value="NOT_ANNOTATED_CDS"/>
    <property type="molecule type" value="Genomic_DNA"/>
</dbReference>
<dbReference type="RefSeq" id="NP_001284476.1">
    <property type="nucleotide sequence ID" value="NM_001297547.1"/>
</dbReference>
<dbReference type="SMR" id="P0DMC2"/>
<dbReference type="FunCoup" id="P0DMC2">
    <property type="interactions" value="224"/>
</dbReference>
<dbReference type="STRING" id="7955.ENSDARP00000138546"/>
<dbReference type="Ensembl" id="ENSDART00000148219">
    <property type="protein sequence ID" value="ENSDARP00000138546"/>
    <property type="gene ID" value="ENSDARG00000094729"/>
</dbReference>
<dbReference type="Ensembl" id="ENSDART00000192420">
    <property type="protein sequence ID" value="ENSDARP00000157341"/>
    <property type="gene ID" value="ENSDARG00000113515"/>
</dbReference>
<dbReference type="GeneID" id="100536023"/>
<dbReference type="KEGG" id="dre:100536023"/>
<dbReference type="AGR" id="ZFIN:ZDB-GENE-090313-116"/>
<dbReference type="CTD" id="100506013"/>
<dbReference type="ZFIN" id="ZDB-GENE-090313-116">
    <property type="gene designation" value="apela"/>
</dbReference>
<dbReference type="HOGENOM" id="CLU_3049692_0_0_1"/>
<dbReference type="InParanoid" id="P0DMC2"/>
<dbReference type="OMA" id="GCSHRRC"/>
<dbReference type="OrthoDB" id="9922869at2759"/>
<dbReference type="PRO" id="PR:P0DMC2"/>
<dbReference type="Proteomes" id="UP000000437">
    <property type="component" value="Alternate scaffold 1"/>
</dbReference>
<dbReference type="Proteomes" id="UP000000437">
    <property type="component" value="Chromosome 1"/>
</dbReference>
<dbReference type="Bgee" id="ENSDARG00000094729">
    <property type="expression patterns" value="Expressed in gastrula and 7 other cell types or tissues"/>
</dbReference>
<dbReference type="ExpressionAtlas" id="P0DMC2">
    <property type="expression patterns" value="baseline"/>
</dbReference>
<dbReference type="GO" id="GO:0005576">
    <property type="term" value="C:extracellular region"/>
    <property type="evidence" value="ECO:0000314"/>
    <property type="project" value="UniProtKB"/>
</dbReference>
<dbReference type="GO" id="GO:0005615">
    <property type="term" value="C:extracellular space"/>
    <property type="evidence" value="ECO:0000314"/>
    <property type="project" value="ZFIN"/>
</dbReference>
<dbReference type="GO" id="GO:0031704">
    <property type="term" value="F:apelin receptor binding"/>
    <property type="evidence" value="ECO:0000314"/>
    <property type="project" value="UniProtKB"/>
</dbReference>
<dbReference type="GO" id="GO:0005179">
    <property type="term" value="F:hormone activity"/>
    <property type="evidence" value="ECO:0000315"/>
    <property type="project" value="UniProtKB"/>
</dbReference>
<dbReference type="GO" id="GO:0048018">
    <property type="term" value="F:receptor ligand activity"/>
    <property type="evidence" value="ECO:0000304"/>
    <property type="project" value="ZFIN"/>
</dbReference>
<dbReference type="GO" id="GO:0007512">
    <property type="term" value="P:adult heart development"/>
    <property type="evidence" value="ECO:0000250"/>
    <property type="project" value="UniProtKB"/>
</dbReference>
<dbReference type="GO" id="GO:0035479">
    <property type="term" value="P:angioblast cell migration from lateral mesoderm to midline"/>
    <property type="evidence" value="ECO:0000315"/>
    <property type="project" value="ZFIN"/>
</dbReference>
<dbReference type="GO" id="GO:0060183">
    <property type="term" value="P:apelin receptor signaling pathway"/>
    <property type="evidence" value="ECO:0000314"/>
    <property type="project" value="UniProtKB"/>
</dbReference>
<dbReference type="GO" id="GO:0042074">
    <property type="term" value="P:cell migration involved in gastrulation"/>
    <property type="evidence" value="ECO:0000315"/>
    <property type="project" value="ZFIN"/>
</dbReference>
<dbReference type="GO" id="GO:0090134">
    <property type="term" value="P:cell migration involved in mesendoderm migration"/>
    <property type="evidence" value="ECO:0000314"/>
    <property type="project" value="ZFIN"/>
</dbReference>
<dbReference type="GO" id="GO:0043009">
    <property type="term" value="P:chordate embryonic development"/>
    <property type="evidence" value="ECO:0000315"/>
    <property type="project" value="ZFIN"/>
</dbReference>
<dbReference type="GO" id="GO:0060976">
    <property type="term" value="P:coronary vasculature development"/>
    <property type="evidence" value="ECO:0000250"/>
    <property type="project" value="UniProtKB"/>
</dbReference>
<dbReference type="GO" id="GO:0061371">
    <property type="term" value="P:determination of heart left/right asymmetry"/>
    <property type="evidence" value="ECO:0000315"/>
    <property type="project" value="ZFIN"/>
</dbReference>
<dbReference type="GO" id="GO:0007368">
    <property type="term" value="P:determination of left/right symmetry"/>
    <property type="evidence" value="ECO:0000315"/>
    <property type="project" value="ZFIN"/>
</dbReference>
<dbReference type="GO" id="GO:0071910">
    <property type="term" value="P:determination of liver left/right asymmetry"/>
    <property type="evidence" value="ECO:0000315"/>
    <property type="project" value="ZFIN"/>
</dbReference>
<dbReference type="GO" id="GO:0035050">
    <property type="term" value="P:embryonic heart tube development"/>
    <property type="evidence" value="ECO:0000250"/>
    <property type="project" value="UniProtKB"/>
</dbReference>
<dbReference type="GO" id="GO:0007492">
    <property type="term" value="P:endoderm development"/>
    <property type="evidence" value="ECO:0000315"/>
    <property type="project" value="UniProtKB"/>
</dbReference>
<dbReference type="GO" id="GO:0035987">
    <property type="term" value="P:endodermal cell differentiation"/>
    <property type="evidence" value="ECO:0000315"/>
    <property type="project" value="ZFIN"/>
</dbReference>
<dbReference type="GO" id="GO:0007507">
    <property type="term" value="P:heart development"/>
    <property type="evidence" value="ECO:0000315"/>
    <property type="project" value="UniProtKB"/>
</dbReference>
<dbReference type="GO" id="GO:0070121">
    <property type="term" value="P:Kupffer's vesicle development"/>
    <property type="evidence" value="ECO:0000315"/>
    <property type="project" value="ZFIN"/>
</dbReference>
<dbReference type="GO" id="GO:0090133">
    <property type="term" value="P:mesendoderm migration"/>
    <property type="evidence" value="ECO:0000315"/>
    <property type="project" value="UniProtKB"/>
</dbReference>
<dbReference type="GO" id="GO:0007509">
    <property type="term" value="P:mesoderm migration involved in gastrulation"/>
    <property type="evidence" value="ECO:0000315"/>
    <property type="project" value="UniProtKB"/>
</dbReference>
<dbReference type="GO" id="GO:0045766">
    <property type="term" value="P:positive regulation of angiogenesis"/>
    <property type="evidence" value="ECO:0000250"/>
    <property type="project" value="UniProtKB"/>
</dbReference>
<dbReference type="GO" id="GO:1903589">
    <property type="term" value="P:positive regulation of blood vessel endothelial cell proliferation involved in sprouting angiogenesis"/>
    <property type="evidence" value="ECO:0000250"/>
    <property type="project" value="UniProtKB"/>
</dbReference>
<dbReference type="GO" id="GO:0070374">
    <property type="term" value="P:positive regulation of ERK1 and ERK2 cascade"/>
    <property type="evidence" value="ECO:0000250"/>
    <property type="project" value="UniProtKB"/>
</dbReference>
<dbReference type="GO" id="GO:0045823">
    <property type="term" value="P:positive regulation of heart contraction"/>
    <property type="evidence" value="ECO:0000250"/>
    <property type="project" value="UniProtKB"/>
</dbReference>
<dbReference type="GO" id="GO:1901165">
    <property type="term" value="P:positive regulation of trophoblast cell migration"/>
    <property type="evidence" value="ECO:0000250"/>
    <property type="project" value="UniProtKB"/>
</dbReference>
<dbReference type="GO" id="GO:0002040">
    <property type="term" value="P:sprouting angiogenesis"/>
    <property type="evidence" value="ECO:0000316"/>
    <property type="project" value="ZFIN"/>
</dbReference>
<dbReference type="GO" id="GO:0001570">
    <property type="term" value="P:vasculogenesis"/>
    <property type="evidence" value="ECO:0000250"/>
    <property type="project" value="UniProtKB"/>
</dbReference>
<dbReference type="CDD" id="cd20244">
    <property type="entry name" value="Toddler"/>
    <property type="match status" value="1"/>
</dbReference>
<dbReference type="InterPro" id="IPR047853">
    <property type="entry name" value="ELA"/>
</dbReference>
<dbReference type="Pfam" id="PF22050">
    <property type="entry name" value="Toddler"/>
    <property type="match status" value="1"/>
</dbReference>
<reference key="1">
    <citation type="journal article" date="2013" name="Nature">
        <title>The zebrafish reference genome sequence and its relationship to the human genome.</title>
        <authorList>
            <person name="Howe K."/>
            <person name="Clark M.D."/>
            <person name="Torroja C.F."/>
            <person name="Torrance J."/>
            <person name="Berthelot C."/>
            <person name="Muffato M."/>
            <person name="Collins J.E."/>
            <person name="Humphray S."/>
            <person name="McLaren K."/>
            <person name="Matthews L."/>
            <person name="McLaren S."/>
            <person name="Sealy I."/>
            <person name="Caccamo M."/>
            <person name="Churcher C."/>
            <person name="Scott C."/>
            <person name="Barrett J.C."/>
            <person name="Koch R."/>
            <person name="Rauch G.J."/>
            <person name="White S."/>
            <person name="Chow W."/>
            <person name="Kilian B."/>
            <person name="Quintais L.T."/>
            <person name="Guerra-Assuncao J.A."/>
            <person name="Zhou Y."/>
            <person name="Gu Y."/>
            <person name="Yen J."/>
            <person name="Vogel J.H."/>
            <person name="Eyre T."/>
            <person name="Redmond S."/>
            <person name="Banerjee R."/>
            <person name="Chi J."/>
            <person name="Fu B."/>
            <person name="Langley E."/>
            <person name="Maguire S.F."/>
            <person name="Laird G.K."/>
            <person name="Lloyd D."/>
            <person name="Kenyon E."/>
            <person name="Donaldson S."/>
            <person name="Sehra H."/>
            <person name="Almeida-King J."/>
            <person name="Loveland J."/>
            <person name="Trevanion S."/>
            <person name="Jones M."/>
            <person name="Quail M."/>
            <person name="Willey D."/>
            <person name="Hunt A."/>
            <person name="Burton J."/>
            <person name="Sims S."/>
            <person name="McLay K."/>
            <person name="Plumb B."/>
            <person name="Davis J."/>
            <person name="Clee C."/>
            <person name="Oliver K."/>
            <person name="Clark R."/>
            <person name="Riddle C."/>
            <person name="Elliot D."/>
            <person name="Threadgold G."/>
            <person name="Harden G."/>
            <person name="Ware D."/>
            <person name="Begum S."/>
            <person name="Mortimore B."/>
            <person name="Kerry G."/>
            <person name="Heath P."/>
            <person name="Phillimore B."/>
            <person name="Tracey A."/>
            <person name="Corby N."/>
            <person name="Dunn M."/>
            <person name="Johnson C."/>
            <person name="Wood J."/>
            <person name="Clark S."/>
            <person name="Pelan S."/>
            <person name="Griffiths G."/>
            <person name="Smith M."/>
            <person name="Glithero R."/>
            <person name="Howden P."/>
            <person name="Barker N."/>
            <person name="Lloyd C."/>
            <person name="Stevens C."/>
            <person name="Harley J."/>
            <person name="Holt K."/>
            <person name="Panagiotidis G."/>
            <person name="Lovell J."/>
            <person name="Beasley H."/>
            <person name="Henderson C."/>
            <person name="Gordon D."/>
            <person name="Auger K."/>
            <person name="Wright D."/>
            <person name="Collins J."/>
            <person name="Raisen C."/>
            <person name="Dyer L."/>
            <person name="Leung K."/>
            <person name="Robertson L."/>
            <person name="Ambridge K."/>
            <person name="Leongamornlert D."/>
            <person name="McGuire S."/>
            <person name="Gilderthorp R."/>
            <person name="Griffiths C."/>
            <person name="Manthravadi D."/>
            <person name="Nichol S."/>
            <person name="Barker G."/>
            <person name="Whitehead S."/>
            <person name="Kay M."/>
            <person name="Brown J."/>
            <person name="Murnane C."/>
            <person name="Gray E."/>
            <person name="Humphries M."/>
            <person name="Sycamore N."/>
            <person name="Barker D."/>
            <person name="Saunders D."/>
            <person name="Wallis J."/>
            <person name="Babbage A."/>
            <person name="Hammond S."/>
            <person name="Mashreghi-Mohammadi M."/>
            <person name="Barr L."/>
            <person name="Martin S."/>
            <person name="Wray P."/>
            <person name="Ellington A."/>
            <person name="Matthews N."/>
            <person name="Ellwood M."/>
            <person name="Woodmansey R."/>
            <person name="Clark G."/>
            <person name="Cooper J."/>
            <person name="Tromans A."/>
            <person name="Grafham D."/>
            <person name="Skuce C."/>
            <person name="Pandian R."/>
            <person name="Andrews R."/>
            <person name="Harrison E."/>
            <person name="Kimberley A."/>
            <person name="Garnett J."/>
            <person name="Fosker N."/>
            <person name="Hall R."/>
            <person name="Garner P."/>
            <person name="Kelly D."/>
            <person name="Bird C."/>
            <person name="Palmer S."/>
            <person name="Gehring I."/>
            <person name="Berger A."/>
            <person name="Dooley C.M."/>
            <person name="Ersan-Urun Z."/>
            <person name="Eser C."/>
            <person name="Geiger H."/>
            <person name="Geisler M."/>
            <person name="Karotki L."/>
            <person name="Kirn A."/>
            <person name="Konantz J."/>
            <person name="Konantz M."/>
            <person name="Oberlander M."/>
            <person name="Rudolph-Geiger S."/>
            <person name="Teucke M."/>
            <person name="Lanz C."/>
            <person name="Raddatz G."/>
            <person name="Osoegawa K."/>
            <person name="Zhu B."/>
            <person name="Rapp A."/>
            <person name="Widaa S."/>
            <person name="Langford C."/>
            <person name="Yang F."/>
            <person name="Schuster S.C."/>
            <person name="Carter N.P."/>
            <person name="Harrow J."/>
            <person name="Ning Z."/>
            <person name="Herrero J."/>
            <person name="Searle S.M."/>
            <person name="Enright A."/>
            <person name="Geisler R."/>
            <person name="Plasterk R.H."/>
            <person name="Lee C."/>
            <person name="Westerfield M."/>
            <person name="de Jong P.J."/>
            <person name="Zon L.I."/>
            <person name="Postlethwait J.H."/>
            <person name="Nusslein-Volhard C."/>
            <person name="Hubbard T.J."/>
            <person name="Roest Crollius H."/>
            <person name="Rogers J."/>
            <person name="Stemple D.L."/>
        </authorList>
    </citation>
    <scope>NUCLEOTIDE SEQUENCE [LARGE SCALE GENOMIC DNA]</scope>
    <source>
        <strain>Tuebingen</strain>
    </source>
</reference>
<reference key="2">
    <citation type="journal article" date="2013" name="Dev. Cell">
        <title>ELABELA: a hormone essential for heart development signals via the apelin receptor.</title>
        <authorList>
            <person name="Chng S.C."/>
            <person name="Ho L."/>
            <person name="Tian J."/>
            <person name="Reversade B."/>
        </authorList>
    </citation>
    <scope>FUNCTION</scope>
    <scope>DEVELOPMENTAL STAGE</scope>
    <scope>DISRUPTION PHENOTYPE</scope>
    <scope>INTERACTION WITH APLNRA AND APLNRB</scope>
</reference>
<reference key="3">
    <citation type="journal article" date="2014" name="Science">
        <title>Toddler: an embryonic signal that promotes cell movement via apelin receptors.</title>
        <authorList>
            <person name="Pauli A."/>
            <person name="Norris M.L."/>
            <person name="Valen E."/>
            <person name="Chew G.L."/>
            <person name="Gagnon J.A."/>
            <person name="Zimmerman S."/>
            <person name="Mitchell A."/>
            <person name="Ma J."/>
            <person name="Dubrulle J."/>
            <person name="Reyon D."/>
            <person name="Tsai S.Q."/>
            <person name="Joung J.K."/>
            <person name="Saghatelian A."/>
            <person name="Schier A.F."/>
        </authorList>
    </citation>
    <scope>FUNCTION</scope>
    <scope>SIGNAL SEQUENCE CLEAVAGE SITE</scope>
    <scope>TISSUE SPECIFICITY</scope>
    <scope>IDENTIFICATION BY MASS SPECTROMETRY</scope>
    <scope>SUBCELLULAR LOCATION</scope>
    <scope>DISRUPTION PHENOTYPE</scope>
    <scope>MUTAGENESIS OF ALA-22</scope>
</reference>
<reference key="4">
    <citation type="journal article" date="2015" name="Elife">
        <title>The hormonal peptide Elabela guides angioblasts to the midline during vasculogenesis.</title>
        <authorList>
            <person name="Helker C.S."/>
            <person name="Schuermann A."/>
            <person name="Pollmann C."/>
            <person name="Chng S.C."/>
            <person name="Kiefer F."/>
            <person name="Reversade B."/>
            <person name="Herzog W."/>
        </authorList>
    </citation>
    <scope>FUNCTION</scope>
    <scope>DISRUPTION PHENOTYPE</scope>
</reference>
<reference key="5">
    <citation type="journal article" date="2017" name="Elife">
        <title>Toddler signaling regulates mesodermal cell migration downstream of Nodal signaling.</title>
        <authorList>
            <person name="Norris M.L."/>
            <person name="Pauli A."/>
            <person name="Gagnon J.A."/>
            <person name="Lord N.D."/>
            <person name="Rogers K.W."/>
            <person name="Mosimann C."/>
            <person name="Zon L.I."/>
            <person name="Schier A.F."/>
        </authorList>
    </citation>
    <scope>FUNCTION</scope>
    <scope>DISRUPTION PHENOTYPE</scope>
</reference>
<keyword id="KW-0037">Angiogenesis</keyword>
<keyword id="KW-0217">Developmental protein</keyword>
<keyword id="KW-0221">Differentiation</keyword>
<keyword id="KW-0306">Gastrulation</keyword>
<keyword id="KW-0372">Hormone</keyword>
<keyword id="KW-1185">Reference proteome</keyword>
<keyword id="KW-0964">Secreted</keyword>
<keyword id="KW-0732">Signal</keyword>
<comment type="function">
    <text evidence="1 2 3 4 5 6 7">Peptide hormone that functions as endogenous ligand for the G-protein-coupled apelin receptor (aplnra and/or aplnrb), that plays a role in the regulation of normal cardiovascular function and fluid homeostasis (PubMed:24316148, PubMed:24407481). Functions as a balanced agonist activating both G(i) protein pathway and beta-arrestin pathway of APLNR. Downstream G proteins activation, apelin can inhibit cAMP production and activate key intracellular effectors such as ERKs (By similarity). On the other hand, APLNR activation induces beta-arrestin recruitment to the membrane leading to desensitization and internalization of the receptor (By similarity). Required for mesendodermal differentiation, blood vessels formation and heart morphogenesis during early development and for adult cardiovascular homeostasis (PubMed:24316148, PubMed:24407481, PubMed:26017639, PubMed:29117894). Acts as a motogen by promoting mesendodermal cell migration during gastrulation by binding and activating the apelin receptor (PubMed:24316148, PubMed:24407481, PubMed:29117894). Acts as an early embryonic regulator of cellular movement with a role in migration and development of cardiac progenitor cells (PubMed:24316148, PubMed:24407481). May act as a chemoattractant for the activation of angioblast migration toward the embryonic midline, i.e. the position of the future vessel formation, during vasculogenesis (PubMed:26017639). Positively regulates sinus venosus (SV)-derived endothelial cells migration into the developing heart to promote coronary blood vessel sprouting. Involved in cardioprotective functions during heart failure. Mediates myocardial contractility in an ERK1/2-dependent manner (By similarity).</text>
</comment>
<comment type="subunit">
    <text evidence="4">Interacts with aplnra and aplnrb (PubMed:24316148).</text>
</comment>
<comment type="subcellular location">
    <subcellularLocation>
        <location evidence="5">Secreted</location>
    </subcellularLocation>
    <subcellularLocation>
        <location evidence="5">Secreted</location>
        <location evidence="5">Extracellular space</location>
    </subcellularLocation>
</comment>
<comment type="tissue specificity">
    <text evidence="5">Expressed ubiquitously during late blastula and gastrula stages and becomes restricted to the lateral mesoderm, endoderm, and anterior and posterior notochord after gastrulation (PubMed:24407481).</text>
</comment>
<comment type="developmental stage">
    <text evidence="4">Expressed from the mid-blastula transition (MBT) to 3 days post-fertilization (dpf) (PubMed:24316148). Ubiquitously expressed in dividing cells of the blastoderm before becoming restricted after gastrulation to axial structures, with most prominent expression in the neural tube (PubMed:24316148).</text>
</comment>
<comment type="disruption phenotype">
    <text evidence="4 5 6 7">Zinc-finger-nuclease (ZFN)- or TALEN-mediated apela gene inactivation induces embryonic lethality due to heart dysgenesis around 6 days post-fertilization (dpf) (PubMed:24316148, PubMed:24407481). Mutant embryos show cardiac dysplasia ranging from a rudimentary heart to no heart (PubMed:24316148, PubMed:24407481). Embryos have minimal blood circulation, with an excess of erythrocytes accumulating at the intermediate cell mass (ICM) (PubMed:24316148, PubMed:24407481). Larvae display variable posterior truncations and, at times, tailbud duplications (PubMed:24316148). Posterior tissue defects range from loss of the ventral fin to complete tail and trunk truncations (PubMed:24316148). Embryos also display malformed pharyngeal endoderm, abnormal left-right positioning and formation of the liver (PubMed:24407481). By mid-gastrulation, embryos show reduced endodermal cell numbers and endodermal and mesodermal progenitor cell migration toward the animal pole (PubMed:24316148, PubMed:24407481). CRISPR-induced apela null mutations show also reduced endodermal cell numbers, increased rates of endodermal cells death and reduced endodermal and mesodermal cell migration at mid-gastrulation (PubMed:29117894). Show a strong decrease in the angioblast migration to the embryonic midline during late gastrulation (PubMed:26017639).</text>
</comment>
<comment type="miscellaneous">
    <text evidence="11">Was named Toddler based on the phenotype.</text>
</comment>
<comment type="similarity">
    <text evidence="10">Belongs to the Elabela/Toddler family.</text>
</comment>
<name>ELA_DANRE</name>
<accession>P0DMC2</accession>
<organism>
    <name type="scientific">Danio rerio</name>
    <name type="common">Zebrafish</name>
    <name type="synonym">Brachydanio rerio</name>
    <dbReference type="NCBI Taxonomy" id="7955"/>
    <lineage>
        <taxon>Eukaryota</taxon>
        <taxon>Metazoa</taxon>
        <taxon>Chordata</taxon>
        <taxon>Craniata</taxon>
        <taxon>Vertebrata</taxon>
        <taxon>Euteleostomi</taxon>
        <taxon>Actinopterygii</taxon>
        <taxon>Neopterygii</taxon>
        <taxon>Teleostei</taxon>
        <taxon>Ostariophysi</taxon>
        <taxon>Cypriniformes</taxon>
        <taxon>Danionidae</taxon>
        <taxon>Danioninae</taxon>
        <taxon>Danio</taxon>
    </lineage>
</organism>
<sequence length="58" mass="7021">MRFFHPLYLLLLLLTVLVLISADKHGTKHDFLNLRRKYRRHNCPKKRCLPLHSRVPFP</sequence>
<feature type="signal peptide" evidence="11">
    <location>
        <begin position="1"/>
        <end position="22"/>
    </location>
</feature>
<feature type="chain" id="PRO_0000425559" description="Apelin receptor early endogenous ligand">
    <location>
        <begin position="23"/>
        <end position="58"/>
    </location>
</feature>
<feature type="mutagenesis site" description="Abolishes extracellular localization." evidence="5">
    <original>A</original>
    <variation>W</variation>
    <location>
        <position position="22"/>
    </location>
</feature>
<evidence type="ECO:0000250" key="1">
    <source>
        <dbReference type="UniProtKB" id="P0DMC3"/>
    </source>
</evidence>
<evidence type="ECO:0000250" key="2">
    <source>
        <dbReference type="UniProtKB" id="P0DMC4"/>
    </source>
</evidence>
<evidence type="ECO:0000250" key="3">
    <source>
        <dbReference type="UniProtKB" id="P0DP76"/>
    </source>
</evidence>
<evidence type="ECO:0000269" key="4">
    <source>
    </source>
</evidence>
<evidence type="ECO:0000269" key="5">
    <source>
    </source>
</evidence>
<evidence type="ECO:0000269" key="6">
    <source>
    </source>
</evidence>
<evidence type="ECO:0000269" key="7">
    <source>
    </source>
</evidence>
<evidence type="ECO:0000303" key="8">
    <source>
    </source>
</evidence>
<evidence type="ECO:0000303" key="9">
    <source>
    </source>
</evidence>
<evidence type="ECO:0000305" key="10"/>
<evidence type="ECO:0000305" key="11">
    <source>
    </source>
</evidence>
<proteinExistence type="evidence at protein level"/>